<keyword id="KW-0175">Coiled coil</keyword>
<keyword id="KW-0238">DNA-binding</keyword>
<keyword id="KW-0371">Homeobox</keyword>
<keyword id="KW-0539">Nucleus</keyword>
<keyword id="KW-1185">Reference proteome</keyword>
<keyword id="KW-0804">Transcription</keyword>
<keyword id="KW-0805">Transcription regulation</keyword>
<evidence type="ECO:0000250" key="1"/>
<evidence type="ECO:0000255" key="2"/>
<evidence type="ECO:0000255" key="3">
    <source>
        <dbReference type="PROSITE-ProRule" id="PRU00108"/>
    </source>
</evidence>
<evidence type="ECO:0000255" key="4">
    <source>
        <dbReference type="PROSITE-ProRule" id="PRU00197"/>
    </source>
</evidence>
<evidence type="ECO:0000256" key="5">
    <source>
        <dbReference type="SAM" id="MobiDB-lite"/>
    </source>
</evidence>
<evidence type="ECO:0000305" key="6"/>
<protein>
    <recommendedName>
        <fullName>Homeobox-leucine zipper protein ROC7</fullName>
    </recommendedName>
    <alternativeName>
        <fullName>GLABRA 2-like homeobox protein 7</fullName>
    </alternativeName>
    <alternativeName>
        <fullName>HD-ZIP protein ROC7</fullName>
    </alternativeName>
    <alternativeName>
        <fullName>Homeodomain transcription factor ROC7</fullName>
    </alternativeName>
    <alternativeName>
        <fullName>Protein RICE OUTERMOST CELL-SPECIFIC 7</fullName>
    </alternativeName>
</protein>
<dbReference type="EMBL" id="CM000133">
    <property type="status" value="NOT_ANNOTATED_CDS"/>
    <property type="molecule type" value="Genomic_DNA"/>
</dbReference>
<dbReference type="SMR" id="A2YR02"/>
<dbReference type="STRING" id="39946.A2YR02"/>
<dbReference type="Proteomes" id="UP000007015">
    <property type="component" value="Chromosome 8"/>
</dbReference>
<dbReference type="GO" id="GO:0005634">
    <property type="term" value="C:nucleus"/>
    <property type="evidence" value="ECO:0007669"/>
    <property type="project" value="UniProtKB-SubCell"/>
</dbReference>
<dbReference type="GO" id="GO:0003677">
    <property type="term" value="F:DNA binding"/>
    <property type="evidence" value="ECO:0007669"/>
    <property type="project" value="UniProtKB-KW"/>
</dbReference>
<dbReference type="GO" id="GO:0000981">
    <property type="term" value="F:DNA-binding transcription factor activity, RNA polymerase II-specific"/>
    <property type="evidence" value="ECO:0007669"/>
    <property type="project" value="InterPro"/>
</dbReference>
<dbReference type="GO" id="GO:0008289">
    <property type="term" value="F:lipid binding"/>
    <property type="evidence" value="ECO:0007669"/>
    <property type="project" value="InterPro"/>
</dbReference>
<dbReference type="CDD" id="cd00086">
    <property type="entry name" value="homeodomain"/>
    <property type="match status" value="1"/>
</dbReference>
<dbReference type="CDD" id="cd08875">
    <property type="entry name" value="START_ArGLABRA2_like"/>
    <property type="match status" value="1"/>
</dbReference>
<dbReference type="FunFam" id="3.30.530.20:FF:000026">
    <property type="entry name" value="Homeobox-leucine zipper protein GLABRA 2"/>
    <property type="match status" value="1"/>
</dbReference>
<dbReference type="FunFam" id="1.10.10.60:FF:000229">
    <property type="entry name" value="Homeobox-leucine zipper protein HDG1"/>
    <property type="match status" value="1"/>
</dbReference>
<dbReference type="Gene3D" id="3.30.530.20">
    <property type="match status" value="1"/>
</dbReference>
<dbReference type="Gene3D" id="1.10.10.60">
    <property type="entry name" value="Homeodomain-like"/>
    <property type="match status" value="1"/>
</dbReference>
<dbReference type="InterPro" id="IPR042160">
    <property type="entry name" value="GLABRA2/ANL2/PDF2/ATML1-like"/>
</dbReference>
<dbReference type="InterPro" id="IPR001356">
    <property type="entry name" value="HD"/>
</dbReference>
<dbReference type="InterPro" id="IPR017970">
    <property type="entry name" value="Homeobox_CS"/>
</dbReference>
<dbReference type="InterPro" id="IPR009057">
    <property type="entry name" value="Homeodomain-like_sf"/>
</dbReference>
<dbReference type="InterPro" id="IPR023393">
    <property type="entry name" value="START-like_dom_sf"/>
</dbReference>
<dbReference type="InterPro" id="IPR002913">
    <property type="entry name" value="START_lipid-bd_dom"/>
</dbReference>
<dbReference type="PANTHER" id="PTHR45654">
    <property type="entry name" value="HOMEOBOX-LEUCINE ZIPPER PROTEIN MERISTEM L1"/>
    <property type="match status" value="1"/>
</dbReference>
<dbReference type="PANTHER" id="PTHR45654:SF80">
    <property type="entry name" value="HOMEOBOX-LEUCINE ZIPPER PROTEIN ROC7"/>
    <property type="match status" value="1"/>
</dbReference>
<dbReference type="Pfam" id="PF00046">
    <property type="entry name" value="Homeodomain"/>
    <property type="match status" value="1"/>
</dbReference>
<dbReference type="Pfam" id="PF01852">
    <property type="entry name" value="START"/>
    <property type="match status" value="1"/>
</dbReference>
<dbReference type="SMART" id="SM00389">
    <property type="entry name" value="HOX"/>
    <property type="match status" value="1"/>
</dbReference>
<dbReference type="SMART" id="SM00234">
    <property type="entry name" value="START"/>
    <property type="match status" value="1"/>
</dbReference>
<dbReference type="SUPFAM" id="SSF55961">
    <property type="entry name" value="Bet v1-like"/>
    <property type="match status" value="2"/>
</dbReference>
<dbReference type="SUPFAM" id="SSF46689">
    <property type="entry name" value="Homeodomain-like"/>
    <property type="match status" value="1"/>
</dbReference>
<dbReference type="PROSITE" id="PS00027">
    <property type="entry name" value="HOMEOBOX_1"/>
    <property type="match status" value="1"/>
</dbReference>
<dbReference type="PROSITE" id="PS50071">
    <property type="entry name" value="HOMEOBOX_2"/>
    <property type="match status" value="1"/>
</dbReference>
<dbReference type="PROSITE" id="PS50848">
    <property type="entry name" value="START"/>
    <property type="match status" value="1"/>
</dbReference>
<feature type="chain" id="PRO_0000331744" description="Homeobox-leucine zipper protein ROC7">
    <location>
        <begin position="1"/>
        <end position="749"/>
    </location>
</feature>
<feature type="domain" description="START" evidence="4">
    <location>
        <begin position="256"/>
        <end position="494"/>
    </location>
</feature>
<feature type="DNA-binding region" description="Homeobox" evidence="3">
    <location>
        <begin position="88"/>
        <end position="147"/>
    </location>
</feature>
<feature type="region of interest" description="Disordered" evidence="5">
    <location>
        <begin position="26"/>
        <end position="98"/>
    </location>
</feature>
<feature type="coiled-coil region" evidence="2">
    <location>
        <begin position="137"/>
        <end position="218"/>
    </location>
</feature>
<feature type="compositionally biased region" description="Basic and acidic residues" evidence="5">
    <location>
        <begin position="46"/>
        <end position="57"/>
    </location>
</feature>
<feature type="compositionally biased region" description="Gly residues" evidence="5">
    <location>
        <begin position="68"/>
        <end position="78"/>
    </location>
</feature>
<feature type="compositionally biased region" description="Basic residues" evidence="5">
    <location>
        <begin position="86"/>
        <end position="97"/>
    </location>
</feature>
<sequence length="749" mass="80898">MQSLLDGHHHQLPSLLQQHHNGHHLLDQHQQHQHQLPPQATTTSESDGRAPRDELEMSKSGGSDNLESGGGGGGGGSGDDQDPNQRPRKKRYHRHTQHQIQELEAFFKECPHPDDKQRKELSRELGLEPLQVKFWFQNKRTQMKTQHERHENNALRAENEKLRAENMRYKEALANASCPNCGGPAAIGEMSFDEHHLRLENARLRDEIDRISAIAAKYVGKPAAAVSAAYPPLPPSNRSPLDHMGIPGAGADVFGADFDKPLVIELAVAAMEELVRMAQLGEPLWAPALGGEALGEEEYARTFPRGLGPKSPELRSEASRETAVVIMNHVSLVEMLMDVGQWTALFSSIVSRAATLEVLSTGVAGNHNGALQLMSAEFQMPSPLVPTRETQFLRYCKQHPDGTWAVVDVSLDGLRAGAGGGCQPAAARGHRRRPSGCLIQEMPNGYSKVTWVEHVEADDQMVHNLYKPVVNSGMAFGARRWVATLERQCERLASAMASNVASSGDAGVITTSEGRRSMLKLAERMVASFCGGVTASTTHQWTTLSGSGAEDVRVMTRKSVDDPGRPPGIVLNAATSFWLPVPPSRVFDFLRDDSTRSEWDILSNGGVVQEMAHIANGRDHGNAVSLLRVNNANSNQSNMLILQECCTDATGSYVIYAPVDVVAMNVVLNGGDPDYVALLPSGFAILPDGPDGGGGSLLTVAFQILVDSVPTAKLSLGSVATVNSLIACTVERIKAAITGDNGVAPPCPR</sequence>
<name>ROC7_ORYSI</name>
<organism>
    <name type="scientific">Oryza sativa subsp. indica</name>
    <name type="common">Rice</name>
    <dbReference type="NCBI Taxonomy" id="39946"/>
    <lineage>
        <taxon>Eukaryota</taxon>
        <taxon>Viridiplantae</taxon>
        <taxon>Streptophyta</taxon>
        <taxon>Embryophyta</taxon>
        <taxon>Tracheophyta</taxon>
        <taxon>Spermatophyta</taxon>
        <taxon>Magnoliopsida</taxon>
        <taxon>Liliopsida</taxon>
        <taxon>Poales</taxon>
        <taxon>Poaceae</taxon>
        <taxon>BOP clade</taxon>
        <taxon>Oryzoideae</taxon>
        <taxon>Oryzeae</taxon>
        <taxon>Oryzinae</taxon>
        <taxon>Oryza</taxon>
        <taxon>Oryza sativa</taxon>
    </lineage>
</organism>
<accession>A2YR02</accession>
<gene>
    <name type="primary">ROC7</name>
    <name type="synonym">GL2-7</name>
    <name type="ORF">OsI_026745</name>
</gene>
<reference key="1">
    <citation type="journal article" date="2005" name="PLoS Biol.">
        <title>The genomes of Oryza sativa: a history of duplications.</title>
        <authorList>
            <person name="Yu J."/>
            <person name="Wang J."/>
            <person name="Lin W."/>
            <person name="Li S."/>
            <person name="Li H."/>
            <person name="Zhou J."/>
            <person name="Ni P."/>
            <person name="Dong W."/>
            <person name="Hu S."/>
            <person name="Zeng C."/>
            <person name="Zhang J."/>
            <person name="Zhang Y."/>
            <person name="Li R."/>
            <person name="Xu Z."/>
            <person name="Li S."/>
            <person name="Li X."/>
            <person name="Zheng H."/>
            <person name="Cong L."/>
            <person name="Lin L."/>
            <person name="Yin J."/>
            <person name="Geng J."/>
            <person name="Li G."/>
            <person name="Shi J."/>
            <person name="Liu J."/>
            <person name="Lv H."/>
            <person name="Li J."/>
            <person name="Wang J."/>
            <person name="Deng Y."/>
            <person name="Ran L."/>
            <person name="Shi X."/>
            <person name="Wang X."/>
            <person name="Wu Q."/>
            <person name="Li C."/>
            <person name="Ren X."/>
            <person name="Wang J."/>
            <person name="Wang X."/>
            <person name="Li D."/>
            <person name="Liu D."/>
            <person name="Zhang X."/>
            <person name="Ji Z."/>
            <person name="Zhao W."/>
            <person name="Sun Y."/>
            <person name="Zhang Z."/>
            <person name="Bao J."/>
            <person name="Han Y."/>
            <person name="Dong L."/>
            <person name="Ji J."/>
            <person name="Chen P."/>
            <person name="Wu S."/>
            <person name="Liu J."/>
            <person name="Xiao Y."/>
            <person name="Bu D."/>
            <person name="Tan J."/>
            <person name="Yang L."/>
            <person name="Ye C."/>
            <person name="Zhang J."/>
            <person name="Xu J."/>
            <person name="Zhou Y."/>
            <person name="Yu Y."/>
            <person name="Zhang B."/>
            <person name="Zhuang S."/>
            <person name="Wei H."/>
            <person name="Liu B."/>
            <person name="Lei M."/>
            <person name="Yu H."/>
            <person name="Li Y."/>
            <person name="Xu H."/>
            <person name="Wei S."/>
            <person name="He X."/>
            <person name="Fang L."/>
            <person name="Zhang Z."/>
            <person name="Zhang Y."/>
            <person name="Huang X."/>
            <person name="Su Z."/>
            <person name="Tong W."/>
            <person name="Li J."/>
            <person name="Tong Z."/>
            <person name="Li S."/>
            <person name="Ye J."/>
            <person name="Wang L."/>
            <person name="Fang L."/>
            <person name="Lei T."/>
            <person name="Chen C.-S."/>
            <person name="Chen H.-C."/>
            <person name="Xu Z."/>
            <person name="Li H."/>
            <person name="Huang H."/>
            <person name="Zhang F."/>
            <person name="Xu H."/>
            <person name="Li N."/>
            <person name="Zhao C."/>
            <person name="Li S."/>
            <person name="Dong L."/>
            <person name="Huang Y."/>
            <person name="Li L."/>
            <person name="Xi Y."/>
            <person name="Qi Q."/>
            <person name="Li W."/>
            <person name="Zhang B."/>
            <person name="Hu W."/>
            <person name="Zhang Y."/>
            <person name="Tian X."/>
            <person name="Jiao Y."/>
            <person name="Liang X."/>
            <person name="Jin J."/>
            <person name="Gao L."/>
            <person name="Zheng W."/>
            <person name="Hao B."/>
            <person name="Liu S.-M."/>
            <person name="Wang W."/>
            <person name="Yuan L."/>
            <person name="Cao M."/>
            <person name="McDermott J."/>
            <person name="Samudrala R."/>
            <person name="Wang J."/>
            <person name="Wong G.K.-S."/>
            <person name="Yang H."/>
        </authorList>
    </citation>
    <scope>NUCLEOTIDE SEQUENCE [LARGE SCALE GENOMIC DNA]</scope>
    <source>
        <strain>cv. 93-11</strain>
    </source>
</reference>
<comment type="function">
    <text evidence="1">Probable transcription factor.</text>
</comment>
<comment type="subcellular location">
    <subcellularLocation>
        <location evidence="6">Nucleus</location>
    </subcellularLocation>
</comment>
<comment type="similarity">
    <text evidence="6">Belongs to the HD-ZIP homeobox family. Class IV subfamily.</text>
</comment>
<proteinExistence type="inferred from homology"/>